<reference key="1">
    <citation type="journal article" date="2000" name="J. Biol. Chem.">
        <title>Nadrin, a novel neuron-specific GTPase-activating protein involved in regulated exocytosis.</title>
        <authorList>
            <person name="Harada A."/>
            <person name="Furuta B."/>
            <person name="Takeuchi K."/>
            <person name="Itakura M."/>
            <person name="Takahashi M."/>
            <person name="Umeda M."/>
        </authorList>
    </citation>
    <scope>NUCLEOTIDE SEQUENCE [MRNA] (ISOFORM 2)</scope>
    <scope>FUNCTION</scope>
    <scope>SUBCELLULAR LOCATION</scope>
    <scope>TISSUE SPECIFICITY</scope>
    <scope>DEVELOPMENTAL STAGE</scope>
    <source>
        <strain>Wistar</strain>
        <tissue>Brain</tissue>
    </source>
</reference>
<reference key="2">
    <citation type="journal article" date="2002" name="J. Neurochem.">
        <title>Identification and functional characterization of nadrin variants, a novel family of GTPase activating protein for rho GTPases.</title>
        <authorList>
            <person name="Furuta B."/>
            <person name="Harada A."/>
            <person name="Kobayashi Y."/>
            <person name="Takeuchi K."/>
            <person name="Kobayashi T."/>
            <person name="Umeda M."/>
        </authorList>
    </citation>
    <scope>NUCLEOTIDE SEQUENCE [MRNA] (ISOFORMS 1; 3 AND 4)</scope>
    <scope>TISSUE SPECIFICITY</scope>
</reference>
<reference key="3">
    <citation type="journal article" date="2004" name="Genome Res.">
        <title>The status, quality, and expansion of the NIH full-length cDNA project: the Mammalian Gene Collection (MGC).</title>
        <authorList>
            <consortium name="The MGC Project Team"/>
        </authorList>
    </citation>
    <scope>NUCLEOTIDE SEQUENCE [LARGE SCALE MRNA] (ISOFORM 1)</scope>
    <source>
        <tissue>Kidney</tissue>
    </source>
</reference>
<reference key="4">
    <citation type="journal article" date="2012" name="Nat. Commun.">
        <title>Quantitative maps of protein phosphorylation sites across 14 different rat organs and tissues.</title>
        <authorList>
            <person name="Lundby A."/>
            <person name="Secher A."/>
            <person name="Lage K."/>
            <person name="Nordsborg N.B."/>
            <person name="Dmytriyev A."/>
            <person name="Lundby C."/>
            <person name="Olsen J.V."/>
        </authorList>
    </citation>
    <scope>PHOSPHORYLATION [LARGE SCALE ANALYSIS] AT THR-742; THR-746 AND THR-748</scope>
    <scope>IDENTIFICATION BY MASS SPECTROMETRY [LARGE SCALE ANALYSIS]</scope>
</reference>
<evidence type="ECO:0000250" key="1"/>
<evidence type="ECO:0000250" key="2">
    <source>
        <dbReference type="UniProtKB" id="Q3UIA2"/>
    </source>
</evidence>
<evidence type="ECO:0000250" key="3">
    <source>
        <dbReference type="UniProtKB" id="Q68EM7"/>
    </source>
</evidence>
<evidence type="ECO:0000255" key="4"/>
<evidence type="ECO:0000255" key="5">
    <source>
        <dbReference type="PROSITE-ProRule" id="PRU00172"/>
    </source>
</evidence>
<evidence type="ECO:0000255" key="6">
    <source>
        <dbReference type="PROSITE-ProRule" id="PRU00361"/>
    </source>
</evidence>
<evidence type="ECO:0000256" key="7">
    <source>
        <dbReference type="SAM" id="MobiDB-lite"/>
    </source>
</evidence>
<evidence type="ECO:0000269" key="8">
    <source>
    </source>
</evidence>
<evidence type="ECO:0000269" key="9">
    <source>
    </source>
</evidence>
<evidence type="ECO:0000303" key="10">
    <source>
    </source>
</evidence>
<evidence type="ECO:0000303" key="11">
    <source>
    </source>
</evidence>
<evidence type="ECO:0007744" key="12">
    <source>
    </source>
</evidence>
<protein>
    <recommendedName>
        <fullName>Rho GTPase-activating protein 17</fullName>
    </recommendedName>
    <alternativeName>
        <fullName>Neuron-associated developmentally-regulated protein</fullName>
        <shortName>Nadrin</shortName>
    </alternativeName>
    <alternativeName>
        <fullName>Rho-type GTPase-activating protein 17</fullName>
    </alternativeName>
</protein>
<organism>
    <name type="scientific">Rattus norvegicus</name>
    <name type="common">Rat</name>
    <dbReference type="NCBI Taxonomy" id="10116"/>
    <lineage>
        <taxon>Eukaryota</taxon>
        <taxon>Metazoa</taxon>
        <taxon>Chordata</taxon>
        <taxon>Craniata</taxon>
        <taxon>Vertebrata</taxon>
        <taxon>Euteleostomi</taxon>
        <taxon>Mammalia</taxon>
        <taxon>Eutheria</taxon>
        <taxon>Euarchontoglires</taxon>
        <taxon>Glires</taxon>
        <taxon>Rodentia</taxon>
        <taxon>Myomorpha</taxon>
        <taxon>Muroidea</taxon>
        <taxon>Muridae</taxon>
        <taxon>Murinae</taxon>
        <taxon>Rattus</taxon>
    </lineage>
</organism>
<keyword id="KW-0025">Alternative splicing</keyword>
<keyword id="KW-0965">Cell junction</keyword>
<keyword id="KW-0963">Cytoplasm</keyword>
<keyword id="KW-0343">GTPase activation</keyword>
<keyword id="KW-0472">Membrane</keyword>
<keyword id="KW-0597">Phosphoprotein</keyword>
<keyword id="KW-1185">Reference proteome</keyword>
<keyword id="KW-0729">SH3-binding</keyword>
<keyword id="KW-0796">Tight junction</keyword>
<dbReference type="EMBL" id="AB042827">
    <property type="protein sequence ID" value="BAB12426.1"/>
    <property type="molecule type" value="mRNA"/>
</dbReference>
<dbReference type="EMBL" id="AB060556">
    <property type="protein sequence ID" value="BAB43864.1"/>
    <property type="molecule type" value="mRNA"/>
</dbReference>
<dbReference type="EMBL" id="AB060557">
    <property type="protein sequence ID" value="BAB43865.1"/>
    <property type="molecule type" value="mRNA"/>
</dbReference>
<dbReference type="EMBL" id="AB080637">
    <property type="protein sequence ID" value="BAB85655.1"/>
    <property type="molecule type" value="mRNA"/>
</dbReference>
<dbReference type="EMBL" id="BC085736">
    <property type="protein sequence ID" value="AAH85736.1"/>
    <property type="molecule type" value="mRNA"/>
</dbReference>
<dbReference type="RefSeq" id="NP_001257621.1">
    <molecule id="Q99N37-1"/>
    <property type="nucleotide sequence ID" value="NM_001270692.1"/>
</dbReference>
<dbReference type="RefSeq" id="NP_001257622.1">
    <molecule id="Q99N37-4"/>
    <property type="nucleotide sequence ID" value="NM_001270693.1"/>
</dbReference>
<dbReference type="RefSeq" id="NP_001257623.1">
    <molecule id="Q99N37-3"/>
    <property type="nucleotide sequence ID" value="NM_001270694.1"/>
</dbReference>
<dbReference type="RefSeq" id="NP_071580.1">
    <molecule id="Q99N37-2"/>
    <property type="nucleotide sequence ID" value="NM_022244.2"/>
</dbReference>
<dbReference type="RefSeq" id="XP_063128700.1">
    <molecule id="Q99N37-4"/>
    <property type="nucleotide sequence ID" value="XM_063272630.1"/>
</dbReference>
<dbReference type="RefSeq" id="XP_063128709.1">
    <molecule id="Q99N37-3"/>
    <property type="nucleotide sequence ID" value="XM_063272639.1"/>
</dbReference>
<dbReference type="SMR" id="Q99N37"/>
<dbReference type="CORUM" id="Q99N37"/>
<dbReference type="FunCoup" id="Q99N37">
    <property type="interactions" value="4016"/>
</dbReference>
<dbReference type="STRING" id="10116.ENSRNOP00000038504"/>
<dbReference type="GlyGen" id="Q99N37">
    <property type="glycosylation" value="3 sites"/>
</dbReference>
<dbReference type="iPTMnet" id="Q99N37"/>
<dbReference type="PhosphoSitePlus" id="Q99N37"/>
<dbReference type="jPOST" id="Q99N37"/>
<dbReference type="PaxDb" id="10116-ENSRNOP00000038504"/>
<dbReference type="Ensembl" id="ENSRNOT00000019304.8">
    <molecule id="Q99N37-4"/>
    <property type="protein sequence ID" value="ENSRNOP00000019305.8"/>
    <property type="gene ID" value="ENSRNOG00000013836.9"/>
</dbReference>
<dbReference type="Ensembl" id="ENSRNOT00000031770.8">
    <molecule id="Q99N37-1"/>
    <property type="protein sequence ID" value="ENSRNOP00000038504.7"/>
    <property type="gene ID" value="ENSRNOG00000013836.9"/>
</dbReference>
<dbReference type="GeneID" id="63994"/>
<dbReference type="KEGG" id="rno:63994"/>
<dbReference type="UCSC" id="RGD:628767">
    <molecule id="Q99N37-1"/>
    <property type="organism name" value="rat"/>
</dbReference>
<dbReference type="AGR" id="RGD:628767"/>
<dbReference type="CTD" id="55114"/>
<dbReference type="RGD" id="628767">
    <property type="gene designation" value="Arhgap17"/>
</dbReference>
<dbReference type="eggNOG" id="KOG4270">
    <property type="taxonomic scope" value="Eukaryota"/>
</dbReference>
<dbReference type="GeneTree" id="ENSGT00940000156201"/>
<dbReference type="InParanoid" id="Q99N37"/>
<dbReference type="OMA" id="REHRRSW"/>
<dbReference type="PhylomeDB" id="Q99N37"/>
<dbReference type="Reactome" id="R-RNO-9013148">
    <property type="pathway name" value="CDC42 GTPase cycle"/>
</dbReference>
<dbReference type="Reactome" id="R-RNO-9013149">
    <property type="pathway name" value="RAC1 GTPase cycle"/>
</dbReference>
<dbReference type="Reactome" id="R-RNO-9013404">
    <property type="pathway name" value="RAC2 GTPase cycle"/>
</dbReference>
<dbReference type="Reactome" id="R-RNO-9013405">
    <property type="pathway name" value="RHOD GTPase cycle"/>
</dbReference>
<dbReference type="Reactome" id="R-RNO-9013406">
    <property type="pathway name" value="RHOQ GTPase cycle"/>
</dbReference>
<dbReference type="PRO" id="PR:Q99N37"/>
<dbReference type="Proteomes" id="UP000002494">
    <property type="component" value="Chromosome 1"/>
</dbReference>
<dbReference type="GO" id="GO:0005923">
    <property type="term" value="C:bicellular tight junction"/>
    <property type="evidence" value="ECO:0007669"/>
    <property type="project" value="UniProtKB-SubCell"/>
</dbReference>
<dbReference type="GO" id="GO:0005737">
    <property type="term" value="C:cytoplasm"/>
    <property type="evidence" value="ECO:0000314"/>
    <property type="project" value="MGI"/>
</dbReference>
<dbReference type="GO" id="GO:0005829">
    <property type="term" value="C:cytosol"/>
    <property type="evidence" value="ECO:0000318"/>
    <property type="project" value="GO_Central"/>
</dbReference>
<dbReference type="GO" id="GO:0005886">
    <property type="term" value="C:plasma membrane"/>
    <property type="evidence" value="ECO:0000266"/>
    <property type="project" value="RGD"/>
</dbReference>
<dbReference type="GO" id="GO:0005096">
    <property type="term" value="F:GTPase activator activity"/>
    <property type="evidence" value="ECO:0000318"/>
    <property type="project" value="GO_Central"/>
</dbReference>
<dbReference type="GO" id="GO:0017124">
    <property type="term" value="F:SH3 domain binding"/>
    <property type="evidence" value="ECO:0007669"/>
    <property type="project" value="UniProtKB-KW"/>
</dbReference>
<dbReference type="GO" id="GO:0007015">
    <property type="term" value="P:actin filament organization"/>
    <property type="evidence" value="ECO:0000314"/>
    <property type="project" value="MGI"/>
</dbReference>
<dbReference type="GO" id="GO:0017156">
    <property type="term" value="P:calcium-ion regulated exocytosis"/>
    <property type="evidence" value="ECO:0000314"/>
    <property type="project" value="MGI"/>
</dbReference>
<dbReference type="GO" id="GO:0051058">
    <property type="term" value="P:negative regulation of small GTPase mediated signal transduction"/>
    <property type="evidence" value="ECO:0000318"/>
    <property type="project" value="GO_Central"/>
</dbReference>
<dbReference type="GO" id="GO:0032956">
    <property type="term" value="P:regulation of actin cytoskeleton organization"/>
    <property type="evidence" value="ECO:0000318"/>
    <property type="project" value="GO_Central"/>
</dbReference>
<dbReference type="GO" id="GO:0035020">
    <property type="term" value="P:regulation of Rac protein signal transduction"/>
    <property type="evidence" value="ECO:0000318"/>
    <property type="project" value="GO_Central"/>
</dbReference>
<dbReference type="GO" id="GO:0007165">
    <property type="term" value="P:signal transduction"/>
    <property type="evidence" value="ECO:0007669"/>
    <property type="project" value="InterPro"/>
</dbReference>
<dbReference type="CDD" id="cd07618">
    <property type="entry name" value="BAR_Rich1"/>
    <property type="match status" value="1"/>
</dbReference>
<dbReference type="CDD" id="cd04386">
    <property type="entry name" value="RhoGAP_nadrin"/>
    <property type="match status" value="1"/>
</dbReference>
<dbReference type="FunFam" id="1.10.555.10:FF:000001">
    <property type="entry name" value="Rho GTPase activating protein 44"/>
    <property type="match status" value="1"/>
</dbReference>
<dbReference type="FunFam" id="1.20.1270.60:FF:000019">
    <property type="entry name" value="rho GTPase-activating protein 17 isoform X1"/>
    <property type="match status" value="1"/>
</dbReference>
<dbReference type="Gene3D" id="1.20.1270.60">
    <property type="entry name" value="Arfaptin homology (AH) domain/BAR domain"/>
    <property type="match status" value="1"/>
</dbReference>
<dbReference type="Gene3D" id="1.10.555.10">
    <property type="entry name" value="Rho GTPase activation protein"/>
    <property type="match status" value="1"/>
</dbReference>
<dbReference type="InterPro" id="IPR027267">
    <property type="entry name" value="AH/BAR_dom_sf"/>
</dbReference>
<dbReference type="InterPro" id="IPR004148">
    <property type="entry name" value="BAR_dom"/>
</dbReference>
<dbReference type="InterPro" id="IPR047165">
    <property type="entry name" value="RHG17/44/SH3BP1-like"/>
</dbReference>
<dbReference type="InterPro" id="IPR008936">
    <property type="entry name" value="Rho_GTPase_activation_prot"/>
</dbReference>
<dbReference type="InterPro" id="IPR000198">
    <property type="entry name" value="RhoGAP_dom"/>
</dbReference>
<dbReference type="PANTHER" id="PTHR14130">
    <property type="entry name" value="3BP-1 RELATED RHOGAP"/>
    <property type="match status" value="1"/>
</dbReference>
<dbReference type="PANTHER" id="PTHR14130:SF3">
    <property type="entry name" value="RHO GTPASE-ACTIVATING PROTEIN 17"/>
    <property type="match status" value="1"/>
</dbReference>
<dbReference type="Pfam" id="PF03114">
    <property type="entry name" value="BAR"/>
    <property type="match status" value="1"/>
</dbReference>
<dbReference type="Pfam" id="PF00620">
    <property type="entry name" value="RhoGAP"/>
    <property type="match status" value="1"/>
</dbReference>
<dbReference type="SMART" id="SM00721">
    <property type="entry name" value="BAR"/>
    <property type="match status" value="1"/>
</dbReference>
<dbReference type="SMART" id="SM00324">
    <property type="entry name" value="RhoGAP"/>
    <property type="match status" value="1"/>
</dbReference>
<dbReference type="SUPFAM" id="SSF103657">
    <property type="entry name" value="BAR/IMD domain-like"/>
    <property type="match status" value="1"/>
</dbReference>
<dbReference type="SUPFAM" id="SSF48350">
    <property type="entry name" value="GTPase activation domain, GAP"/>
    <property type="match status" value="1"/>
</dbReference>
<dbReference type="PROSITE" id="PS51021">
    <property type="entry name" value="BAR"/>
    <property type="match status" value="1"/>
</dbReference>
<dbReference type="PROSITE" id="PS50238">
    <property type="entry name" value="RHOGAP"/>
    <property type="match status" value="1"/>
</dbReference>
<accession>Q99N37</accession>
<accession>Q8R506</accession>
<accession>Q99N38</accession>
<accession>Q9EQV7</accession>
<name>RHG17_RAT</name>
<proteinExistence type="evidence at protein level"/>
<feature type="chain" id="PRO_0000280464" description="Rho GTPase-activating protein 17">
    <location>
        <begin position="1"/>
        <end position="858"/>
    </location>
</feature>
<feature type="domain" description="BAR" evidence="6">
    <location>
        <begin position="14"/>
        <end position="246"/>
    </location>
</feature>
<feature type="domain" description="Rho-GAP" evidence="5">
    <location>
        <begin position="252"/>
        <end position="442"/>
    </location>
</feature>
<feature type="region of interest" description="Disordered" evidence="7">
    <location>
        <begin position="459"/>
        <end position="482"/>
    </location>
</feature>
<feature type="region of interest" description="Disordered" evidence="7">
    <location>
        <begin position="516"/>
        <end position="823"/>
    </location>
</feature>
<feature type="short sequence motif" description="SH3-binding" evidence="4">
    <location>
        <begin position="742"/>
        <end position="755"/>
    </location>
</feature>
<feature type="compositionally biased region" description="Polar residues" evidence="7">
    <location>
        <begin position="459"/>
        <end position="475"/>
    </location>
</feature>
<feature type="compositionally biased region" description="Polar residues" evidence="7">
    <location>
        <begin position="543"/>
        <end position="552"/>
    </location>
</feature>
<feature type="compositionally biased region" description="Low complexity" evidence="7">
    <location>
        <begin position="553"/>
        <end position="563"/>
    </location>
</feature>
<feature type="compositionally biased region" description="Polar residues" evidence="7">
    <location>
        <begin position="592"/>
        <end position="617"/>
    </location>
</feature>
<feature type="compositionally biased region" description="Pro residues" evidence="7">
    <location>
        <begin position="637"/>
        <end position="650"/>
    </location>
</feature>
<feature type="compositionally biased region" description="Low complexity" evidence="7">
    <location>
        <begin position="653"/>
        <end position="702"/>
    </location>
</feature>
<feature type="compositionally biased region" description="Pro residues" evidence="7">
    <location>
        <begin position="716"/>
        <end position="729"/>
    </location>
</feature>
<feature type="compositionally biased region" description="Pro residues" evidence="7">
    <location>
        <begin position="738"/>
        <end position="756"/>
    </location>
</feature>
<feature type="compositionally biased region" description="Polar residues" evidence="7">
    <location>
        <begin position="757"/>
        <end position="769"/>
    </location>
</feature>
<feature type="compositionally biased region" description="Pro residues" evidence="7">
    <location>
        <begin position="784"/>
        <end position="794"/>
    </location>
</feature>
<feature type="compositionally biased region" description="Polar residues" evidence="7">
    <location>
        <begin position="806"/>
        <end position="823"/>
    </location>
</feature>
<feature type="site" description="Arginine finger; crucial for GTP hydrolysis by stabilizing the transition state" evidence="5">
    <location>
        <position position="288"/>
    </location>
</feature>
<feature type="modified residue" description="Phosphoserine" evidence="3">
    <location>
        <position position="484"/>
    </location>
</feature>
<feature type="modified residue" description="Phosphoserine" evidence="3">
    <location>
        <position position="575"/>
    </location>
</feature>
<feature type="modified residue" description="Phosphoserine" evidence="2">
    <location>
        <position position="710"/>
    </location>
</feature>
<feature type="modified residue" description="Phosphoserine" evidence="2">
    <location>
        <position position="712"/>
    </location>
</feature>
<feature type="modified residue" description="Phosphothreonine" evidence="12">
    <location>
        <position position="742"/>
    </location>
</feature>
<feature type="modified residue" description="Phosphothreonine" evidence="12">
    <location>
        <position position="746"/>
    </location>
</feature>
<feature type="modified residue" description="Phosphothreonine" evidence="12">
    <location>
        <position position="748"/>
    </location>
</feature>
<feature type="modified residue" description="Phosphoserine" evidence="2">
    <location>
        <position position="751"/>
    </location>
</feature>
<feature type="modified residue" description="Phosphothreonine" evidence="2">
    <location>
        <position position="752"/>
    </location>
</feature>
<feature type="splice variant" id="VSP_023693" description="In isoform 2 and isoform 3." evidence="10 11">
    <location>
        <begin position="497"/>
        <end position="574"/>
    </location>
</feature>
<feature type="splice variant" id="VSP_023694" description="In isoform 3 and isoform 4." evidence="11">
    <original>TNSRVSESLRNIFPEIHSDLASKEVPGHILLDIDNDTESTAL</original>
    <variation>ALPGALTGGEGFQN</variation>
    <location>
        <begin position="817"/>
        <end position="858"/>
    </location>
</feature>
<comment type="function">
    <text evidence="1 8">Rho GTPase-activating protein involved in the maintenance of tight junction by regulating the activity of CDC42, thereby playing a central role in apical polarity of epithelial cells. Specifically acts as a GTPase activator for the CDC42 GTPase by converting it to an inactive GDP-bound state. The complex formed with AMOT acts by regulating the uptake of polarity proteins at tight junctions, possibly by deciding whether tight junction transmembrane proteins are recycled back to the plasma membrane or sent elsewhere (By similarity). Participates in the Ca(2+)-dependent regulation of exocytosis, possibly by catalyzing GTPase activity of Rho family proteins and by inducing the reorganization of the cortical actin filaments. Acts as a GTPase activator in vitro for RAC1.</text>
</comment>
<comment type="subunit">
    <text evidence="1">Component of a complex whose core is composed of ARHGAP17, AMOT, PALS1, PATJ and PARD3/PAR3. Interacts with NHERF1, FNBP1, TRIP10, CAPZA (CAPZA1, CAPZA2 or CAPZA3), CAPZB, CD2AP and SH3KBP1/CIN85 (By similarity).</text>
</comment>
<comment type="subcellular location">
    <subcellularLocation>
        <location evidence="8">Membrane</location>
        <topology evidence="8">Peripheral membrane protein</topology>
    </subcellularLocation>
    <subcellularLocation>
        <location evidence="8">Cytoplasm</location>
    </subcellularLocation>
    <subcellularLocation>
        <location evidence="1">Cell junction</location>
        <location evidence="1">Tight junction</location>
    </subcellularLocation>
    <text evidence="1">Associates with membranes and concentrates at sites of cell-cell contact.</text>
</comment>
<comment type="alternative products">
    <event type="alternative splicing"/>
    <isoform>
        <id>Q99N37-1</id>
        <name>1</name>
        <name>Nadrin-126</name>
        <name>Nadrin-E2</name>
        <sequence type="displayed"/>
    </isoform>
    <isoform>
        <id>Q99N37-2</id>
        <name>2</name>
        <name>Nadrin-104</name>
        <sequence type="described" ref="VSP_023693"/>
    </isoform>
    <isoform>
        <id>Q99N37-3</id>
        <name>3</name>
        <name>Nadrin-102</name>
        <sequence type="described" ref="VSP_023693 VSP_023694"/>
    </isoform>
    <isoform>
        <id>Q99N37-4</id>
        <name>4</name>
        <name>Nadrin-116</name>
        <name>Nadrin-E1</name>
        <sequence type="described" ref="VSP_023694"/>
    </isoform>
</comment>
<comment type="tissue specificity">
    <text evidence="8 9">Highly expressed in brain; neuron-specific (at protein level). Isoform 2, isoform 3 and isoform 4 are predominantly expressed in neuronal tissues and correlate well with the differentiation of neurons, while isoform 1 is strongly expressed in embryonic brain.</text>
</comment>
<comment type="developmental stage">
    <text evidence="8">Becomes detectable at the second postnatal week in the cerebral cortex and hippocampus and at the third postnatal week in the cerebellum and olfactory bulb. The expression level is maximal during the third and fourth postnatal weeks and remains high during adulthood. Its expression is closely correlated with neuronal differentiation (at protein level).</text>
</comment>
<comment type="domain">
    <text evidence="1">The BAR domain mediates the interaction with the coiled coil domain of AMOT, leading to its recruitment to tight junctions.</text>
</comment>
<sequence length="858" mass="93754">MKKQFNRMKQLANQTVGRAEKTEVLSEDLLQIERRLDTVRSMCHHSHKRLIACFQGQHGTDAERRHKKLPLTALAQNMQEASAQLEESLLGKMLETCGDAENQLAFELSQHEVFVEKEIMDPLYGIAEVEIPNIQKQRKQLARLVLDWDSVRARWNQAHKSSGTNFQGLPSKIDTLKEEMDEAGNKVEQCKDQLAADMYNFMAKEGEYGKFFVTLLEAQADYHRKALAVLEKALPEMRAHQDKWAEKPAFGTPLEEHLKRSGREIALPIEACVMLLLETGMKEEGLFRIGAGASKLKKLKAALDCSTSHLDEFYSDPHAVAGALKSYLRELPEPLMTFSLYEEWTQVASVQDQDKKLQYLWTTCQKLPPQNFVNFRYLIKFLAKLAQTSDVNKMTPSNIAIVLGPNLLWAKQEGTLAEIAAATSVHVVAVIEPIIQHADWFFPGEVEFNVSEAFVPLATPNSNHSSHTGNDSDSGTLERKRPASMAVMEGDLVKKESFGVKLMDFQAHRRGGTLNRKHISPAFQPPLPPTDGNALAPAGPELPSQSSRADSNSVGGPVPSSSGILEQGLSPGDSSPPKPKDSVSAAAPVAGRNSNQITTVPNQAQTGGNSHQLSVGTAHSAAGPSPHTLRRAVKKPAPAPPKPGNPPPGHPGGQSSPGTGTSPKPSTRSPSPPQQQQQQQQQQQQQQQQQQQQQQQQQQQQQTPGMRRCSSSLPPIQAPNHPPPQPPTQPRLGEQGPEPGPTPPQTPTPPSTPPPAKQNSSQSETTQLHGTLPRPRPVPKPRNRPSVPPPPNPPGTHMGDGGLTPSVPTASRIVTDTNSRVSESLRNIFPEIHSDLASKEVPGHILLDIDNDTESTAL</sequence>
<gene>
    <name type="primary">Arhgap17</name>
</gene>